<name>RK33_ACOCL</name>
<accession>Q3V514</accession>
<comment type="subcellular location">
    <subcellularLocation>
        <location>Plastid</location>
        <location>Chloroplast</location>
    </subcellularLocation>
</comment>
<comment type="similarity">
    <text evidence="1">Belongs to the bacterial ribosomal protein bL33 family.</text>
</comment>
<organism>
    <name type="scientific">Acorus calamus</name>
    <name type="common">Sweet flag</name>
    <dbReference type="NCBI Taxonomy" id="4465"/>
    <lineage>
        <taxon>Eukaryota</taxon>
        <taxon>Viridiplantae</taxon>
        <taxon>Streptophyta</taxon>
        <taxon>Embryophyta</taxon>
        <taxon>Tracheophyta</taxon>
        <taxon>Spermatophyta</taxon>
        <taxon>Magnoliopsida</taxon>
        <taxon>Liliopsida</taxon>
        <taxon>Acoraceae</taxon>
        <taxon>Acorus</taxon>
    </lineage>
</organism>
<gene>
    <name evidence="1" type="primary">rpl33</name>
</gene>
<dbReference type="EMBL" id="AJ879453">
    <property type="protein sequence ID" value="CAI53814.1"/>
    <property type="molecule type" value="Genomic_DNA"/>
</dbReference>
<dbReference type="RefSeq" id="YP_319785.1">
    <property type="nucleotide sequence ID" value="NC_007407.1"/>
</dbReference>
<dbReference type="GeneID" id="3677447"/>
<dbReference type="GO" id="GO:0009507">
    <property type="term" value="C:chloroplast"/>
    <property type="evidence" value="ECO:0007669"/>
    <property type="project" value="UniProtKB-SubCell"/>
</dbReference>
<dbReference type="GO" id="GO:1990904">
    <property type="term" value="C:ribonucleoprotein complex"/>
    <property type="evidence" value="ECO:0007669"/>
    <property type="project" value="UniProtKB-KW"/>
</dbReference>
<dbReference type="GO" id="GO:0005840">
    <property type="term" value="C:ribosome"/>
    <property type="evidence" value="ECO:0007669"/>
    <property type="project" value="UniProtKB-KW"/>
</dbReference>
<dbReference type="GO" id="GO:0003735">
    <property type="term" value="F:structural constituent of ribosome"/>
    <property type="evidence" value="ECO:0007669"/>
    <property type="project" value="InterPro"/>
</dbReference>
<dbReference type="GO" id="GO:0006412">
    <property type="term" value="P:translation"/>
    <property type="evidence" value="ECO:0007669"/>
    <property type="project" value="UniProtKB-UniRule"/>
</dbReference>
<dbReference type="Gene3D" id="2.20.28.120">
    <property type="entry name" value="Ribosomal protein L33"/>
    <property type="match status" value="1"/>
</dbReference>
<dbReference type="HAMAP" id="MF_00294">
    <property type="entry name" value="Ribosomal_bL33"/>
    <property type="match status" value="1"/>
</dbReference>
<dbReference type="InterPro" id="IPR001705">
    <property type="entry name" value="Ribosomal_bL33"/>
</dbReference>
<dbReference type="InterPro" id="IPR018264">
    <property type="entry name" value="Ribosomal_bL33_CS"/>
</dbReference>
<dbReference type="InterPro" id="IPR038584">
    <property type="entry name" value="Ribosomal_bL33_sf"/>
</dbReference>
<dbReference type="InterPro" id="IPR011332">
    <property type="entry name" value="Ribosomal_zn-bd"/>
</dbReference>
<dbReference type="NCBIfam" id="NF001764">
    <property type="entry name" value="PRK00504.1"/>
    <property type="match status" value="1"/>
</dbReference>
<dbReference type="NCBIfam" id="NF001860">
    <property type="entry name" value="PRK00595.1"/>
    <property type="match status" value="1"/>
</dbReference>
<dbReference type="NCBIfam" id="TIGR01023">
    <property type="entry name" value="rpmG_bact"/>
    <property type="match status" value="1"/>
</dbReference>
<dbReference type="PANTHER" id="PTHR43168">
    <property type="entry name" value="50S RIBOSOMAL PROTEIN L33, CHLOROPLASTIC"/>
    <property type="match status" value="1"/>
</dbReference>
<dbReference type="PANTHER" id="PTHR43168:SF2">
    <property type="entry name" value="LARGE RIBOSOMAL SUBUNIT PROTEIN BL33C"/>
    <property type="match status" value="1"/>
</dbReference>
<dbReference type="Pfam" id="PF00471">
    <property type="entry name" value="Ribosomal_L33"/>
    <property type="match status" value="1"/>
</dbReference>
<dbReference type="SUPFAM" id="SSF57829">
    <property type="entry name" value="Zn-binding ribosomal proteins"/>
    <property type="match status" value="1"/>
</dbReference>
<dbReference type="PROSITE" id="PS00582">
    <property type="entry name" value="RIBOSOMAL_L33"/>
    <property type="match status" value="1"/>
</dbReference>
<evidence type="ECO:0000255" key="1">
    <source>
        <dbReference type="HAMAP-Rule" id="MF_00294"/>
    </source>
</evidence>
<evidence type="ECO:0000305" key="2"/>
<protein>
    <recommendedName>
        <fullName evidence="1">Large ribosomal subunit protein bL33c</fullName>
    </recommendedName>
    <alternativeName>
        <fullName evidence="2">50S ribosomal protein L33, chloroplastic</fullName>
    </alternativeName>
</protein>
<sequence length="66" mass="7685">MAKGKDARLTVILECTSCVRNGVNKESPGISRYITQKNRHNTSSRLELRKYCRYCYKHTIHGEIKK</sequence>
<keyword id="KW-0150">Chloroplast</keyword>
<keyword id="KW-0934">Plastid</keyword>
<keyword id="KW-0687">Ribonucleoprotein</keyword>
<keyword id="KW-0689">Ribosomal protein</keyword>
<feature type="chain" id="PRO_0000356779" description="Large ribosomal subunit protein bL33c">
    <location>
        <begin position="1"/>
        <end position="66"/>
    </location>
</feature>
<reference key="1">
    <citation type="journal article" date="2005" name="Mol. Biol. Evol.">
        <title>Analysis of Acorus calamus chloroplast genome and its phylogenetic implications.</title>
        <authorList>
            <person name="Goremykin V.V."/>
            <person name="Holland B."/>
            <person name="Hirsch-Ernst K.I."/>
            <person name="Hellwig F.H."/>
        </authorList>
    </citation>
    <scope>NUCLEOTIDE SEQUENCE [LARGE SCALE GENOMIC DNA]</scope>
</reference>
<proteinExistence type="inferred from homology"/>
<geneLocation type="chloroplast"/>